<keyword id="KW-0067">ATP-binding</keyword>
<keyword id="KW-0106">Calcium</keyword>
<keyword id="KW-0418">Kinase</keyword>
<keyword id="KW-0449">Lipoprotein</keyword>
<keyword id="KW-0472">Membrane</keyword>
<keyword id="KW-0479">Metal-binding</keyword>
<keyword id="KW-0519">Myristate</keyword>
<keyword id="KW-0547">Nucleotide-binding</keyword>
<keyword id="KW-0597">Phosphoprotein</keyword>
<keyword id="KW-1185">Reference proteome</keyword>
<keyword id="KW-0677">Repeat</keyword>
<keyword id="KW-0723">Serine/threonine-protein kinase</keyword>
<keyword id="KW-0808">Transferase</keyword>
<protein>
    <recommendedName>
        <fullName>CDPK-related kinase 8</fullName>
        <shortName>AtCRK8</shortName>
        <ecNumber>2.7.11.1</ecNumber>
    </recommendedName>
    <alternativeName>
        <fullName>Calcium/calmodulin-dependent protein kinase CRK8</fullName>
    </alternativeName>
</protein>
<organism>
    <name type="scientific">Arabidopsis thaliana</name>
    <name type="common">Mouse-ear cress</name>
    <dbReference type="NCBI Taxonomy" id="3702"/>
    <lineage>
        <taxon>Eukaryota</taxon>
        <taxon>Viridiplantae</taxon>
        <taxon>Streptophyta</taxon>
        <taxon>Embryophyta</taxon>
        <taxon>Tracheophyta</taxon>
        <taxon>Spermatophyta</taxon>
        <taxon>Magnoliopsida</taxon>
        <taxon>eudicotyledons</taxon>
        <taxon>Gunneridae</taxon>
        <taxon>Pentapetalae</taxon>
        <taxon>rosids</taxon>
        <taxon>malvids</taxon>
        <taxon>Brassicales</taxon>
        <taxon>Brassicaceae</taxon>
        <taxon>Camelineae</taxon>
        <taxon>Arabidopsis</taxon>
    </lineage>
</organism>
<proteinExistence type="evidence at transcript level"/>
<accession>Q9FX86</accession>
<reference key="1">
    <citation type="journal article" date="2000" name="Nature">
        <title>Sequence and analysis of chromosome 1 of the plant Arabidopsis thaliana.</title>
        <authorList>
            <person name="Theologis A."/>
            <person name="Ecker J.R."/>
            <person name="Palm C.J."/>
            <person name="Federspiel N.A."/>
            <person name="Kaul S."/>
            <person name="White O."/>
            <person name="Alonso J."/>
            <person name="Altafi H."/>
            <person name="Araujo R."/>
            <person name="Bowman C.L."/>
            <person name="Brooks S.Y."/>
            <person name="Buehler E."/>
            <person name="Chan A."/>
            <person name="Chao Q."/>
            <person name="Chen H."/>
            <person name="Cheuk R.F."/>
            <person name="Chin C.W."/>
            <person name="Chung M.K."/>
            <person name="Conn L."/>
            <person name="Conway A.B."/>
            <person name="Conway A.R."/>
            <person name="Creasy T.H."/>
            <person name="Dewar K."/>
            <person name="Dunn P."/>
            <person name="Etgu P."/>
            <person name="Feldblyum T.V."/>
            <person name="Feng J.-D."/>
            <person name="Fong B."/>
            <person name="Fujii C.Y."/>
            <person name="Gill J.E."/>
            <person name="Goldsmith A.D."/>
            <person name="Haas B."/>
            <person name="Hansen N.F."/>
            <person name="Hughes B."/>
            <person name="Huizar L."/>
            <person name="Hunter J.L."/>
            <person name="Jenkins J."/>
            <person name="Johnson-Hopson C."/>
            <person name="Khan S."/>
            <person name="Khaykin E."/>
            <person name="Kim C.J."/>
            <person name="Koo H.L."/>
            <person name="Kremenetskaia I."/>
            <person name="Kurtz D.B."/>
            <person name="Kwan A."/>
            <person name="Lam B."/>
            <person name="Langin-Hooper S."/>
            <person name="Lee A."/>
            <person name="Lee J.M."/>
            <person name="Lenz C.A."/>
            <person name="Li J.H."/>
            <person name="Li Y.-P."/>
            <person name="Lin X."/>
            <person name="Liu S.X."/>
            <person name="Liu Z.A."/>
            <person name="Luros J.S."/>
            <person name="Maiti R."/>
            <person name="Marziali A."/>
            <person name="Militscher J."/>
            <person name="Miranda M."/>
            <person name="Nguyen M."/>
            <person name="Nierman W.C."/>
            <person name="Osborne B.I."/>
            <person name="Pai G."/>
            <person name="Peterson J."/>
            <person name="Pham P.K."/>
            <person name="Rizzo M."/>
            <person name="Rooney T."/>
            <person name="Rowley D."/>
            <person name="Sakano H."/>
            <person name="Salzberg S.L."/>
            <person name="Schwartz J.R."/>
            <person name="Shinn P."/>
            <person name="Southwick A.M."/>
            <person name="Sun H."/>
            <person name="Tallon L.J."/>
            <person name="Tambunga G."/>
            <person name="Toriumi M.J."/>
            <person name="Town C.D."/>
            <person name="Utterback T."/>
            <person name="Van Aken S."/>
            <person name="Vaysberg M."/>
            <person name="Vysotskaia V.S."/>
            <person name="Walker M."/>
            <person name="Wu D."/>
            <person name="Yu G."/>
            <person name="Fraser C.M."/>
            <person name="Venter J.C."/>
            <person name="Davis R.W."/>
        </authorList>
    </citation>
    <scope>NUCLEOTIDE SEQUENCE [LARGE SCALE GENOMIC DNA]</scope>
    <source>
        <strain>cv. Columbia</strain>
    </source>
</reference>
<reference key="2">
    <citation type="journal article" date="2017" name="Plant J.">
        <title>Araport11: a complete reannotation of the Arabidopsis thaliana reference genome.</title>
        <authorList>
            <person name="Cheng C.Y."/>
            <person name="Krishnakumar V."/>
            <person name="Chan A.P."/>
            <person name="Thibaud-Nissen F."/>
            <person name="Schobel S."/>
            <person name="Town C.D."/>
        </authorList>
    </citation>
    <scope>GENOME REANNOTATION</scope>
    <source>
        <strain>cv. Columbia</strain>
    </source>
</reference>
<reference key="3">
    <citation type="submission" date="2003-10" db="EMBL/GenBank/DDBJ databases">
        <title>Arabidopsis ORF clones.</title>
        <authorList>
            <person name="Cheuk R.F."/>
            <person name="Chen H."/>
            <person name="Kim C.J."/>
            <person name="Shinn P."/>
            <person name="Carninci P."/>
            <person name="Hayashizaki Y."/>
            <person name="Ishida J."/>
            <person name="Kamiya A."/>
            <person name="Kawai J."/>
            <person name="Narusaka M."/>
            <person name="Sakurai T."/>
            <person name="Satou M."/>
            <person name="Seki M."/>
            <person name="Shinozaki K."/>
            <person name="Ecker J.R."/>
        </authorList>
    </citation>
    <scope>NUCLEOTIDE SEQUENCE [LARGE SCALE MRNA]</scope>
    <source>
        <strain>cv. Columbia</strain>
    </source>
</reference>
<reference key="4">
    <citation type="submission" date="2006-07" db="EMBL/GenBank/DDBJ databases">
        <title>Large-scale analysis of RIKEN Arabidopsis full-length (RAFL) cDNAs.</title>
        <authorList>
            <person name="Totoki Y."/>
            <person name="Seki M."/>
            <person name="Ishida J."/>
            <person name="Nakajima M."/>
            <person name="Enju A."/>
            <person name="Kamiya A."/>
            <person name="Narusaka M."/>
            <person name="Shin-i T."/>
            <person name="Nakagawa M."/>
            <person name="Sakamoto N."/>
            <person name="Oishi K."/>
            <person name="Kohara Y."/>
            <person name="Kobayashi M."/>
            <person name="Toyoda A."/>
            <person name="Sakaki Y."/>
            <person name="Sakurai T."/>
            <person name="Iida K."/>
            <person name="Akiyama K."/>
            <person name="Satou M."/>
            <person name="Toyoda T."/>
            <person name="Konagaya A."/>
            <person name="Carninci P."/>
            <person name="Kawai J."/>
            <person name="Hayashizaki Y."/>
            <person name="Shinozaki K."/>
        </authorList>
    </citation>
    <scope>NUCLEOTIDE SEQUENCE [LARGE SCALE MRNA]</scope>
    <source>
        <strain>cv. Columbia</strain>
    </source>
</reference>
<reference key="5">
    <citation type="journal article" date="2003" name="Gravit. Space Biol. Bull.">
        <title>Calcium-regulated protein kinases of plants.</title>
        <authorList>
            <person name="Harmon A.C."/>
        </authorList>
    </citation>
    <scope>REVIEW</scope>
    <scope>GENE FAMILY</scope>
</reference>
<reference key="6">
    <citation type="journal article" date="2003" name="Plant Physiol.">
        <title>The Arabidopsis CDPK-SnRK superfamily of protein kinases.</title>
        <authorList>
            <person name="Hrabak E.M."/>
            <person name="Chan C.W.M."/>
            <person name="Gribskov M."/>
            <person name="Harper J.F."/>
            <person name="Choi J.H."/>
            <person name="Halford N."/>
            <person name="Kudla J."/>
            <person name="Luan S."/>
            <person name="Nimmo H.G."/>
            <person name="Sussman M.R."/>
            <person name="Thomas M."/>
            <person name="Walker-Simmons K."/>
            <person name="Zhu J.-K."/>
            <person name="Harmon A.C."/>
        </authorList>
    </citation>
    <scope>GENE FAMILY</scope>
    <scope>NOMENCLATURE</scope>
    <source>
        <strain>cv. Columbia</strain>
    </source>
</reference>
<reference key="7">
    <citation type="journal article" date="2005" name="Plant Sci.">
        <title>Biochemical and expression analysis of an Arabidopsis calcium-dependent protein kinase-related kinase.</title>
        <authorList>
            <person name="Du W."/>
            <person name="Wang Y."/>
            <person name="Liang S."/>
            <person name="Lu Y.-T."/>
        </authorList>
        <dbReference type="AGRICOLA" id="IND43694487"/>
    </citation>
    <scope>GENE FAMILY</scope>
    <source>
        <strain>cv. Columbia</strain>
    </source>
</reference>
<name>CAMK8_ARATH</name>
<evidence type="ECO:0000250" key="1"/>
<evidence type="ECO:0000250" key="2">
    <source>
        <dbReference type="UniProtKB" id="Q9FKW4"/>
    </source>
</evidence>
<evidence type="ECO:0000250" key="3">
    <source>
        <dbReference type="UniProtKB" id="Q9SG12"/>
    </source>
</evidence>
<evidence type="ECO:0000255" key="4">
    <source>
        <dbReference type="PROSITE-ProRule" id="PRU00159"/>
    </source>
</evidence>
<evidence type="ECO:0000255" key="5">
    <source>
        <dbReference type="PROSITE-ProRule" id="PRU10027"/>
    </source>
</evidence>
<evidence type="ECO:0000256" key="6">
    <source>
        <dbReference type="SAM" id="MobiDB-lite"/>
    </source>
</evidence>
<dbReference type="EC" id="2.7.11.1"/>
<dbReference type="EMBL" id="AC011807">
    <property type="protein sequence ID" value="AAG13044.1"/>
    <property type="molecule type" value="Genomic_DNA"/>
</dbReference>
<dbReference type="EMBL" id="CP002684">
    <property type="protein sequence ID" value="AEE32444.1"/>
    <property type="molecule type" value="Genomic_DNA"/>
</dbReference>
<dbReference type="EMBL" id="BT010597">
    <property type="protein sequence ID" value="AAQ89619.1"/>
    <property type="molecule type" value="mRNA"/>
</dbReference>
<dbReference type="EMBL" id="AK229416">
    <property type="protein sequence ID" value="BAF01277.1"/>
    <property type="molecule type" value="mRNA"/>
</dbReference>
<dbReference type="PIR" id="D96532">
    <property type="entry name" value="D96532"/>
</dbReference>
<dbReference type="RefSeq" id="NP_175381.1">
    <property type="nucleotide sequence ID" value="NM_103846.4"/>
</dbReference>
<dbReference type="SMR" id="Q9FX86"/>
<dbReference type="BioGRID" id="26607">
    <property type="interactions" value="4"/>
</dbReference>
<dbReference type="FunCoup" id="Q9FX86">
    <property type="interactions" value="516"/>
</dbReference>
<dbReference type="IntAct" id="Q9FX86">
    <property type="interactions" value="2"/>
</dbReference>
<dbReference type="STRING" id="3702.Q9FX86"/>
<dbReference type="GlyGen" id="Q9FX86">
    <property type="glycosylation" value="1 site"/>
</dbReference>
<dbReference type="iPTMnet" id="Q9FX86"/>
<dbReference type="PaxDb" id="3702-AT1G49580.1"/>
<dbReference type="ProteomicsDB" id="240282"/>
<dbReference type="EnsemblPlants" id="AT1G49580.1">
    <property type="protein sequence ID" value="AT1G49580.1"/>
    <property type="gene ID" value="AT1G49580"/>
</dbReference>
<dbReference type="GeneID" id="841382"/>
<dbReference type="Gramene" id="AT1G49580.1">
    <property type="protein sequence ID" value="AT1G49580.1"/>
    <property type="gene ID" value="AT1G49580"/>
</dbReference>
<dbReference type="KEGG" id="ath:AT1G49580"/>
<dbReference type="Araport" id="AT1G49580"/>
<dbReference type="TAIR" id="AT1G49580"/>
<dbReference type="eggNOG" id="KOG0032">
    <property type="taxonomic scope" value="Eukaryota"/>
</dbReference>
<dbReference type="HOGENOM" id="CLU_000288_37_2_1"/>
<dbReference type="InParanoid" id="Q9FX86"/>
<dbReference type="OMA" id="GNDYPQI"/>
<dbReference type="PhylomeDB" id="Q9FX86"/>
<dbReference type="PRO" id="PR:Q9FX86"/>
<dbReference type="Proteomes" id="UP000006548">
    <property type="component" value="Chromosome 1"/>
</dbReference>
<dbReference type="ExpressionAtlas" id="Q9FX86">
    <property type="expression patterns" value="baseline and differential"/>
</dbReference>
<dbReference type="GO" id="GO:0016020">
    <property type="term" value="C:membrane"/>
    <property type="evidence" value="ECO:0007669"/>
    <property type="project" value="UniProtKB-SubCell"/>
</dbReference>
<dbReference type="GO" id="GO:0005524">
    <property type="term" value="F:ATP binding"/>
    <property type="evidence" value="ECO:0007669"/>
    <property type="project" value="UniProtKB-KW"/>
</dbReference>
<dbReference type="GO" id="GO:0046872">
    <property type="term" value="F:metal ion binding"/>
    <property type="evidence" value="ECO:0007669"/>
    <property type="project" value="UniProtKB-KW"/>
</dbReference>
<dbReference type="GO" id="GO:0106310">
    <property type="term" value="F:protein serine kinase activity"/>
    <property type="evidence" value="ECO:0007669"/>
    <property type="project" value="RHEA"/>
</dbReference>
<dbReference type="GO" id="GO:0004674">
    <property type="term" value="F:protein serine/threonine kinase activity"/>
    <property type="evidence" value="ECO:0007669"/>
    <property type="project" value="UniProtKB-KW"/>
</dbReference>
<dbReference type="CDD" id="cd05117">
    <property type="entry name" value="STKc_CAMK"/>
    <property type="match status" value="1"/>
</dbReference>
<dbReference type="FunFam" id="1.10.510.10:FF:001864">
    <property type="entry name" value="Calcium-dependent protein kinase SK5"/>
    <property type="match status" value="1"/>
</dbReference>
<dbReference type="FunFam" id="1.10.238.10:FF:000085">
    <property type="entry name" value="CDPK-related kinase 1"/>
    <property type="match status" value="1"/>
</dbReference>
<dbReference type="FunFam" id="3.30.200.20:FF:000101">
    <property type="entry name" value="CDPK-related kinase 1"/>
    <property type="match status" value="1"/>
</dbReference>
<dbReference type="FunFam" id="1.10.510.10:FF:001294">
    <property type="entry name" value="CDPK-related kinase 3"/>
    <property type="match status" value="1"/>
</dbReference>
<dbReference type="Gene3D" id="1.10.238.10">
    <property type="entry name" value="EF-hand"/>
    <property type="match status" value="2"/>
</dbReference>
<dbReference type="Gene3D" id="3.30.200.20">
    <property type="entry name" value="Phosphorylase Kinase, domain 1"/>
    <property type="match status" value="1"/>
</dbReference>
<dbReference type="Gene3D" id="1.10.510.10">
    <property type="entry name" value="Transferase(Phosphotransferase) domain 1"/>
    <property type="match status" value="1"/>
</dbReference>
<dbReference type="InterPro" id="IPR050205">
    <property type="entry name" value="CDPK_Ser/Thr_kinases"/>
</dbReference>
<dbReference type="InterPro" id="IPR011992">
    <property type="entry name" value="EF-hand-dom_pair"/>
</dbReference>
<dbReference type="InterPro" id="IPR011009">
    <property type="entry name" value="Kinase-like_dom_sf"/>
</dbReference>
<dbReference type="InterPro" id="IPR000719">
    <property type="entry name" value="Prot_kinase_dom"/>
</dbReference>
<dbReference type="InterPro" id="IPR017441">
    <property type="entry name" value="Protein_kinase_ATP_BS"/>
</dbReference>
<dbReference type="InterPro" id="IPR008271">
    <property type="entry name" value="Ser/Thr_kinase_AS"/>
</dbReference>
<dbReference type="PANTHER" id="PTHR24349">
    <property type="entry name" value="SERINE/THREONINE-PROTEIN KINASE"/>
    <property type="match status" value="1"/>
</dbReference>
<dbReference type="Pfam" id="PF00069">
    <property type="entry name" value="Pkinase"/>
    <property type="match status" value="1"/>
</dbReference>
<dbReference type="SMART" id="SM00220">
    <property type="entry name" value="S_TKc"/>
    <property type="match status" value="1"/>
</dbReference>
<dbReference type="SUPFAM" id="SSF47473">
    <property type="entry name" value="EF-hand"/>
    <property type="match status" value="1"/>
</dbReference>
<dbReference type="SUPFAM" id="SSF56112">
    <property type="entry name" value="Protein kinase-like (PK-like)"/>
    <property type="match status" value="1"/>
</dbReference>
<dbReference type="PROSITE" id="PS00107">
    <property type="entry name" value="PROTEIN_KINASE_ATP"/>
    <property type="match status" value="1"/>
</dbReference>
<dbReference type="PROSITE" id="PS50011">
    <property type="entry name" value="PROTEIN_KINASE_DOM"/>
    <property type="match status" value="1"/>
</dbReference>
<dbReference type="PROSITE" id="PS00108">
    <property type="entry name" value="PROTEIN_KINASE_ST"/>
    <property type="match status" value="1"/>
</dbReference>
<feature type="initiator methionine" description="Removed" evidence="3">
    <location>
        <position position="1"/>
    </location>
</feature>
<feature type="chain" id="PRO_0000420535" description="CDPK-related kinase 8">
    <location>
        <begin position="2"/>
        <end position="606"/>
    </location>
</feature>
<feature type="domain" description="Protein kinase" evidence="4">
    <location>
        <begin position="150"/>
        <end position="412"/>
    </location>
</feature>
<feature type="domain" description="EF-hand 1">
    <location>
        <begin position="455"/>
        <end position="491"/>
    </location>
</feature>
<feature type="domain" description="EF-hand 2">
    <location>
        <begin position="492"/>
        <end position="527"/>
    </location>
</feature>
<feature type="domain" description="EF-hand 3">
    <location>
        <begin position="528"/>
        <end position="567"/>
    </location>
</feature>
<feature type="domain" description="EF-hand 4">
    <location>
        <begin position="570"/>
        <end position="599"/>
    </location>
</feature>
<feature type="region of interest" description="Disordered" evidence="6">
    <location>
        <begin position="1"/>
        <end position="132"/>
    </location>
</feature>
<feature type="region of interest" description="Autoinhibitory domain" evidence="1">
    <location>
        <begin position="418"/>
        <end position="448"/>
    </location>
</feature>
<feature type="region of interest" description="Calmodulin binding (CaMBD)" evidence="1">
    <location>
        <begin position="437"/>
        <end position="457"/>
    </location>
</feature>
<feature type="compositionally biased region" description="Polar residues" evidence="6">
    <location>
        <begin position="1"/>
        <end position="14"/>
    </location>
</feature>
<feature type="compositionally biased region" description="Basic residues" evidence="6">
    <location>
        <begin position="98"/>
        <end position="110"/>
    </location>
</feature>
<feature type="active site" description="Proton acceptor" evidence="4 5">
    <location>
        <position position="278"/>
    </location>
</feature>
<feature type="binding site" evidence="4">
    <location>
        <begin position="156"/>
        <end position="164"/>
    </location>
    <ligand>
        <name>ATP</name>
        <dbReference type="ChEBI" id="CHEBI:30616"/>
    </ligand>
</feature>
<feature type="binding site" evidence="4">
    <location>
        <position position="182"/>
    </location>
    <ligand>
        <name>ATP</name>
        <dbReference type="ChEBI" id="CHEBI:30616"/>
    </ligand>
</feature>
<feature type="binding site" evidence="1">
    <location>
        <position position="470"/>
    </location>
    <ligand>
        <name>Ca(2+)</name>
        <dbReference type="ChEBI" id="CHEBI:29108"/>
        <label>1</label>
    </ligand>
</feature>
<feature type="binding site" evidence="1">
    <location>
        <position position="472"/>
    </location>
    <ligand>
        <name>Ca(2+)</name>
        <dbReference type="ChEBI" id="CHEBI:29108"/>
        <label>1</label>
    </ligand>
</feature>
<feature type="binding site" evidence="1">
    <location>
        <position position="516"/>
    </location>
    <ligand>
        <name>Ca(2+)</name>
        <dbReference type="ChEBI" id="CHEBI:29108"/>
        <label>2</label>
    </ligand>
</feature>
<feature type="binding site" evidence="1">
    <location>
        <position position="545"/>
    </location>
    <ligand>
        <name>Ca(2+)</name>
        <dbReference type="ChEBI" id="CHEBI:29108"/>
        <label>3</label>
    </ligand>
</feature>
<feature type="binding site" evidence="1">
    <location>
        <position position="547"/>
    </location>
    <ligand>
        <name>Ca(2+)</name>
        <dbReference type="ChEBI" id="CHEBI:29108"/>
        <label>3</label>
    </ligand>
</feature>
<feature type="binding site" evidence="1">
    <location>
        <position position="549"/>
    </location>
    <ligand>
        <name>Ca(2+)</name>
        <dbReference type="ChEBI" id="CHEBI:29108"/>
        <label>3</label>
    </ligand>
</feature>
<feature type="binding site" evidence="1">
    <location>
        <position position="556"/>
    </location>
    <ligand>
        <name>Ca(2+)</name>
        <dbReference type="ChEBI" id="CHEBI:29108"/>
        <label>3</label>
    </ligand>
</feature>
<feature type="binding site" evidence="1">
    <location>
        <position position="581"/>
    </location>
    <ligand>
        <name>Ca(2+)</name>
        <dbReference type="ChEBI" id="CHEBI:29108"/>
        <label>4</label>
    </ligand>
</feature>
<feature type="binding site" evidence="1">
    <location>
        <position position="583"/>
    </location>
    <ligand>
        <name>Ca(2+)</name>
        <dbReference type="ChEBI" id="CHEBI:29108"/>
        <label>4</label>
    </ligand>
</feature>
<feature type="modified residue" description="Phosphoserine" evidence="2">
    <location>
        <position position="318"/>
    </location>
</feature>
<feature type="modified residue" description="Phosphoserine" evidence="2">
    <location>
        <position position="585"/>
    </location>
</feature>
<feature type="lipid moiety-binding region" description="N-myristoyl glycine" evidence="1">
    <location>
        <position position="2"/>
    </location>
</feature>
<sequence length="606" mass="67973">MGGCTSKPSTSSGRPNPFAPGNDYPQIDDFAPDHPGKSPIPTPSAAKASPFFPFYTPSPARHRRNKSRDVGGGGESKSLTSTPLRQLRRAFHPPSPAKHIRAALRRRKGKKEAALSGVTQLTTEVPQREEEEEVGLDKRFGFSKEFHSRVELGEEIGRGHFGYTCSAKFKKGELKGQVVAVKIIPKSKMTTAIAIEDVRREVKILQALSGHKNLVQFYDAFEDNANVYIAMELCEGGELLDRILARGGKYSENDAKPVIIQILNVVAFCHFQGVVHRDLKPENFLYTSKEENSQLKAIDFGLSDFVRPDERLNDIVGSAYYVAPEVLHRSYTTEADVWSIGVIAYILLCGSRPFWARTESGIFRAVLKADPSFDEPPWPFLSSDAKDFVKRLLFKDPRRRMSASQALMHPWIRAYNTDMNIPFDILIFRQMKAYLRSSSLRKAALRALSKTLIKDEILYLKTQFSLLAPNKDGLITMDTIRMALASNATEAMKESRIPEFLALLNGLQYRGMDFEEFCAAAINVHQHESLDCWEQSIRHAYELFDKNGNRAIVIEELASELGVGPSIPVHSVLHDWIRHTDGKLSFFGFVKLLHGVSVRASGKTTR</sequence>
<gene>
    <name type="primary">CRK8</name>
    <name type="ordered locus">At1g49580</name>
    <name type="ORF">F14J22.18</name>
</gene>
<comment type="function">
    <text evidence="1">May play a role in signal transduction pathways that involve calcium as a second messenger.</text>
</comment>
<comment type="catalytic activity">
    <reaction>
        <text>L-seryl-[protein] + ATP = O-phospho-L-seryl-[protein] + ADP + H(+)</text>
        <dbReference type="Rhea" id="RHEA:17989"/>
        <dbReference type="Rhea" id="RHEA-COMP:9863"/>
        <dbReference type="Rhea" id="RHEA-COMP:11604"/>
        <dbReference type="ChEBI" id="CHEBI:15378"/>
        <dbReference type="ChEBI" id="CHEBI:29999"/>
        <dbReference type="ChEBI" id="CHEBI:30616"/>
        <dbReference type="ChEBI" id="CHEBI:83421"/>
        <dbReference type="ChEBI" id="CHEBI:456216"/>
        <dbReference type="EC" id="2.7.11.1"/>
    </reaction>
</comment>
<comment type="catalytic activity">
    <reaction>
        <text>L-threonyl-[protein] + ATP = O-phospho-L-threonyl-[protein] + ADP + H(+)</text>
        <dbReference type="Rhea" id="RHEA:46608"/>
        <dbReference type="Rhea" id="RHEA-COMP:11060"/>
        <dbReference type="Rhea" id="RHEA-COMP:11605"/>
        <dbReference type="ChEBI" id="CHEBI:15378"/>
        <dbReference type="ChEBI" id="CHEBI:30013"/>
        <dbReference type="ChEBI" id="CHEBI:30616"/>
        <dbReference type="ChEBI" id="CHEBI:61977"/>
        <dbReference type="ChEBI" id="CHEBI:456216"/>
        <dbReference type="EC" id="2.7.11.1"/>
    </reaction>
</comment>
<comment type="activity regulation">
    <text evidence="1">Activated by calcium and calmodulin. Autophosphorylation may play an important role in the regulation of the kinase activity (By similarity).</text>
</comment>
<comment type="subunit">
    <text evidence="1">Binds calmodulin (CaM) in a calcium-dependent manner.</text>
</comment>
<comment type="subcellular location">
    <subcellularLocation>
        <location evidence="1">Membrane</location>
        <topology evidence="1">Lipid-anchor</topology>
        <orientation evidence="1">Cytoplasmic side</orientation>
    </subcellularLocation>
</comment>
<comment type="domain">
    <text evidence="1">There are 3 contiguous domains conserved in the CDPK subfamily: a kinase domain, an autoinhibitory (junction) domain and a calmodulin-like domain. The autoinhibitory domain (418-448) inactivates kinase activity under calcium-free conditions (By similarity).</text>
</comment>
<comment type="PTM">
    <text evidence="1">Autophosphorylated.</text>
</comment>
<comment type="similarity">
    <text evidence="4">Belongs to the protein kinase superfamily. Ser/Thr protein kinase family. CDPK subfamily.</text>
</comment>